<organism>
    <name type="scientific">Arabidopsis thaliana</name>
    <name type="common">Mouse-ear cress</name>
    <dbReference type="NCBI Taxonomy" id="3702"/>
    <lineage>
        <taxon>Eukaryota</taxon>
        <taxon>Viridiplantae</taxon>
        <taxon>Streptophyta</taxon>
        <taxon>Embryophyta</taxon>
        <taxon>Tracheophyta</taxon>
        <taxon>Spermatophyta</taxon>
        <taxon>Magnoliopsida</taxon>
        <taxon>eudicotyledons</taxon>
        <taxon>Gunneridae</taxon>
        <taxon>Pentapetalae</taxon>
        <taxon>rosids</taxon>
        <taxon>malvids</taxon>
        <taxon>Brassicales</taxon>
        <taxon>Brassicaceae</taxon>
        <taxon>Camelineae</taxon>
        <taxon>Arabidopsis</taxon>
    </lineage>
</organism>
<keyword id="KW-0328">Glycosyltransferase</keyword>
<keyword id="KW-1185">Reference proteome</keyword>
<keyword id="KW-0808">Transferase</keyword>
<accession>Q9ZVY5</accession>
<gene>
    <name type="primary">UGT75B2</name>
    <name type="synonym">UGT2</name>
    <name type="ordered locus">At1g05530</name>
    <name type="ORF">T25N20.18</name>
</gene>
<dbReference type="EC" id="2.4.1.-"/>
<dbReference type="EC" id="2.4.1.121"/>
<dbReference type="EMBL" id="AC005106">
    <property type="protein sequence ID" value="AAF79732.1"/>
    <property type="molecule type" value="Genomic_DNA"/>
</dbReference>
<dbReference type="EMBL" id="CP002684">
    <property type="protein sequence ID" value="AEE27849.1"/>
    <property type="molecule type" value="Genomic_DNA"/>
</dbReference>
<dbReference type="RefSeq" id="NP_172044.1">
    <property type="nucleotide sequence ID" value="NM_100432.2"/>
</dbReference>
<dbReference type="SMR" id="Q9ZVY5"/>
<dbReference type="FunCoup" id="Q9ZVY5">
    <property type="interactions" value="119"/>
</dbReference>
<dbReference type="STRING" id="3702.Q9ZVY5"/>
<dbReference type="CAZy" id="GT1">
    <property type="family name" value="Glycosyltransferase Family 1"/>
</dbReference>
<dbReference type="PaxDb" id="3702-AT1G05530.1"/>
<dbReference type="ProteomicsDB" id="242810"/>
<dbReference type="EnsemblPlants" id="AT1G05530.1">
    <property type="protein sequence ID" value="AT1G05530.1"/>
    <property type="gene ID" value="AT1G05530"/>
</dbReference>
<dbReference type="GeneID" id="837055"/>
<dbReference type="Gramene" id="AT1G05530.1">
    <property type="protein sequence ID" value="AT1G05530.1"/>
    <property type="gene ID" value="AT1G05530"/>
</dbReference>
<dbReference type="KEGG" id="ath:AT1G05530"/>
<dbReference type="Araport" id="AT1G05530"/>
<dbReference type="TAIR" id="AT1G05530">
    <property type="gene designation" value="UGT75B2"/>
</dbReference>
<dbReference type="eggNOG" id="KOG1192">
    <property type="taxonomic scope" value="Eukaryota"/>
</dbReference>
<dbReference type="HOGENOM" id="CLU_001724_0_1_1"/>
<dbReference type="InParanoid" id="Q9ZVY5"/>
<dbReference type="OMA" id="FDIYYNY"/>
<dbReference type="OrthoDB" id="5835829at2759"/>
<dbReference type="PhylomeDB" id="Q9ZVY5"/>
<dbReference type="BioCyc" id="ARA:AT1G05530-MONOMER"/>
<dbReference type="BioCyc" id="MetaCyc:AT1G05530-MONOMER"/>
<dbReference type="UniPathway" id="UPA00376"/>
<dbReference type="PRO" id="PR:Q9ZVY5"/>
<dbReference type="Proteomes" id="UP000006548">
    <property type="component" value="Chromosome 1"/>
</dbReference>
<dbReference type="ExpressionAtlas" id="Q9ZVY5">
    <property type="expression patterns" value="baseline and differential"/>
</dbReference>
<dbReference type="GO" id="GO:0005794">
    <property type="term" value="C:Golgi apparatus"/>
    <property type="evidence" value="ECO:0000314"/>
    <property type="project" value="TAIR"/>
</dbReference>
<dbReference type="GO" id="GO:0047215">
    <property type="term" value="F:indole-3-acetate beta-glucosyltransferase activity"/>
    <property type="evidence" value="ECO:0007669"/>
    <property type="project" value="UniProtKB-EC"/>
</dbReference>
<dbReference type="GO" id="GO:0035251">
    <property type="term" value="F:UDP-glucosyltransferase activity"/>
    <property type="evidence" value="ECO:0000314"/>
    <property type="project" value="TAIR"/>
</dbReference>
<dbReference type="CDD" id="cd03784">
    <property type="entry name" value="GT1_Gtf-like"/>
    <property type="match status" value="1"/>
</dbReference>
<dbReference type="FunFam" id="3.40.50.2000:FF:000019">
    <property type="entry name" value="Glycosyltransferase"/>
    <property type="match status" value="1"/>
</dbReference>
<dbReference type="Gene3D" id="3.40.50.2000">
    <property type="entry name" value="Glycogen Phosphorylase B"/>
    <property type="match status" value="2"/>
</dbReference>
<dbReference type="InterPro" id="IPR002213">
    <property type="entry name" value="UDP_glucos_trans"/>
</dbReference>
<dbReference type="InterPro" id="IPR035595">
    <property type="entry name" value="UDP_glycos_trans_CS"/>
</dbReference>
<dbReference type="PANTHER" id="PTHR11926">
    <property type="entry name" value="GLUCOSYL/GLUCURONOSYL TRANSFERASES"/>
    <property type="match status" value="1"/>
</dbReference>
<dbReference type="PANTHER" id="PTHR11926:SF1449">
    <property type="entry name" value="UDP-GLYCOSYLTRANSFERASE 75B2"/>
    <property type="match status" value="1"/>
</dbReference>
<dbReference type="Pfam" id="PF00201">
    <property type="entry name" value="UDPGT"/>
    <property type="match status" value="1"/>
</dbReference>
<dbReference type="SUPFAM" id="SSF53756">
    <property type="entry name" value="UDP-Glycosyltransferase/glycogen phosphorylase"/>
    <property type="match status" value="1"/>
</dbReference>
<dbReference type="PROSITE" id="PS00375">
    <property type="entry name" value="UDPGT"/>
    <property type="match status" value="1"/>
</dbReference>
<protein>
    <recommendedName>
        <fullName>UDP-glycosyltransferase 75B2</fullName>
        <ecNumber>2.4.1.-</ecNumber>
    </recommendedName>
    <alternativeName>
        <fullName>(Uridine 5'-diphosphate-glucose:indol-3-ylacetyl)-beta-D-glucosyl transferase 2</fullName>
    </alternativeName>
    <alternativeName>
        <fullName>IAA-Glu synthase 2</fullName>
    </alternativeName>
    <alternativeName>
        <fullName>Indole-3-acetate beta-glucosyltransferase 2</fullName>
        <ecNumber>2.4.1.121</ecNumber>
    </alternativeName>
</protein>
<comment type="function">
    <text evidence="3 4">Possesses low catalytic activity in vitro. Also active as glucosyltransferase in vitro on benzoates and benzoate derivatives.</text>
</comment>
<comment type="catalytic activity">
    <reaction>
        <text>(indol-3-yl)acetate + UDP-alpha-D-glucose = 1-O-(indol-3-ylacetyl)-beta-D-glucose + UDP</text>
        <dbReference type="Rhea" id="RHEA:14921"/>
        <dbReference type="ChEBI" id="CHEBI:17990"/>
        <dbReference type="ChEBI" id="CHEBI:30854"/>
        <dbReference type="ChEBI" id="CHEBI:58223"/>
        <dbReference type="ChEBI" id="CHEBI:58885"/>
        <dbReference type="EC" id="2.4.1.121"/>
    </reaction>
</comment>
<comment type="pathway">
    <text>Plant hormone metabolism; auxin conjugation.</text>
</comment>
<comment type="similarity">
    <text evidence="5">Belongs to the UDP-glycosyltransferase family.</text>
</comment>
<reference key="1">
    <citation type="journal article" date="2000" name="Nature">
        <title>Sequence and analysis of chromosome 1 of the plant Arabidopsis thaliana.</title>
        <authorList>
            <person name="Theologis A."/>
            <person name="Ecker J.R."/>
            <person name="Palm C.J."/>
            <person name="Federspiel N.A."/>
            <person name="Kaul S."/>
            <person name="White O."/>
            <person name="Alonso J."/>
            <person name="Altafi H."/>
            <person name="Araujo R."/>
            <person name="Bowman C.L."/>
            <person name="Brooks S.Y."/>
            <person name="Buehler E."/>
            <person name="Chan A."/>
            <person name="Chao Q."/>
            <person name="Chen H."/>
            <person name="Cheuk R.F."/>
            <person name="Chin C.W."/>
            <person name="Chung M.K."/>
            <person name="Conn L."/>
            <person name="Conway A.B."/>
            <person name="Conway A.R."/>
            <person name="Creasy T.H."/>
            <person name="Dewar K."/>
            <person name="Dunn P."/>
            <person name="Etgu P."/>
            <person name="Feldblyum T.V."/>
            <person name="Feng J.-D."/>
            <person name="Fong B."/>
            <person name="Fujii C.Y."/>
            <person name="Gill J.E."/>
            <person name="Goldsmith A.D."/>
            <person name="Haas B."/>
            <person name="Hansen N.F."/>
            <person name="Hughes B."/>
            <person name="Huizar L."/>
            <person name="Hunter J.L."/>
            <person name="Jenkins J."/>
            <person name="Johnson-Hopson C."/>
            <person name="Khan S."/>
            <person name="Khaykin E."/>
            <person name="Kim C.J."/>
            <person name="Koo H.L."/>
            <person name="Kremenetskaia I."/>
            <person name="Kurtz D.B."/>
            <person name="Kwan A."/>
            <person name="Lam B."/>
            <person name="Langin-Hooper S."/>
            <person name="Lee A."/>
            <person name="Lee J.M."/>
            <person name="Lenz C.A."/>
            <person name="Li J.H."/>
            <person name="Li Y.-P."/>
            <person name="Lin X."/>
            <person name="Liu S.X."/>
            <person name="Liu Z.A."/>
            <person name="Luros J.S."/>
            <person name="Maiti R."/>
            <person name="Marziali A."/>
            <person name="Militscher J."/>
            <person name="Miranda M."/>
            <person name="Nguyen M."/>
            <person name="Nierman W.C."/>
            <person name="Osborne B.I."/>
            <person name="Pai G."/>
            <person name="Peterson J."/>
            <person name="Pham P.K."/>
            <person name="Rizzo M."/>
            <person name="Rooney T."/>
            <person name="Rowley D."/>
            <person name="Sakano H."/>
            <person name="Salzberg S.L."/>
            <person name="Schwartz J.R."/>
            <person name="Shinn P."/>
            <person name="Southwick A.M."/>
            <person name="Sun H."/>
            <person name="Tallon L.J."/>
            <person name="Tambunga G."/>
            <person name="Toriumi M.J."/>
            <person name="Town C.D."/>
            <person name="Utterback T."/>
            <person name="Van Aken S."/>
            <person name="Vaysberg M."/>
            <person name="Vysotskaia V.S."/>
            <person name="Walker M."/>
            <person name="Wu D."/>
            <person name="Yu G."/>
            <person name="Fraser C.M."/>
            <person name="Venter J.C."/>
            <person name="Davis R.W."/>
        </authorList>
    </citation>
    <scope>NUCLEOTIDE SEQUENCE [LARGE SCALE GENOMIC DNA]</scope>
    <source>
        <strain>cv. Columbia</strain>
    </source>
</reference>
<reference key="2">
    <citation type="journal article" date="2017" name="Plant J.">
        <title>Araport11: a complete reannotation of the Arabidopsis thaliana reference genome.</title>
        <authorList>
            <person name="Cheng C.Y."/>
            <person name="Krishnakumar V."/>
            <person name="Chan A.P."/>
            <person name="Thibaud-Nissen F."/>
            <person name="Schobel S."/>
            <person name="Town C.D."/>
        </authorList>
    </citation>
    <scope>GENOME REANNOTATION</scope>
    <source>
        <strain>cv. Columbia</strain>
    </source>
</reference>
<reference key="3">
    <citation type="journal article" date="2001" name="J. Biol. Chem.">
        <title>Phylogenetic analysis of the UDP-glycosyltransferase multigene family of Arabidopsis thaliana.</title>
        <authorList>
            <person name="Li Y."/>
            <person name="Baldauf S."/>
            <person name="Lim E.K."/>
            <person name="Bowles D.J."/>
        </authorList>
    </citation>
    <scope>GENE FAMILY</scope>
</reference>
<reference key="4">
    <citation type="journal article" date="2001" name="J. Biol. Chem.">
        <title>Identification and biochemical characterization of an Arabidopsis indole-3-acetic acid glucosyltransferase.</title>
        <authorList>
            <person name="Jackson R.G."/>
            <person name="Lim E.-K."/>
            <person name="Li Y."/>
            <person name="Kowalczyk M."/>
            <person name="Sandberg G."/>
            <person name="Hoggett J."/>
            <person name="Ashford D.A."/>
            <person name="Bowles D.J."/>
        </authorList>
    </citation>
    <scope>FUNCTION</scope>
</reference>
<reference key="5">
    <citation type="journal article" date="2002" name="J. Biol. Chem.">
        <title>The activity of Arabidopsis glycosyltransferases toward salicylic acid, 4-hydroxybenzoic acid, and other benzoates.</title>
        <authorList>
            <person name="Lim E.K."/>
            <person name="Doucet C.J."/>
            <person name="Li Y."/>
            <person name="Elias L."/>
            <person name="Worrall D."/>
            <person name="Spencer S.P."/>
            <person name="Ross J."/>
            <person name="Bowles D.J."/>
        </authorList>
    </citation>
    <scope>FUNCTION</scope>
</reference>
<proteinExistence type="evidence at transcript level"/>
<sequence length="455" mass="51190">MAQPHFLLVTFPAQGHVNPSLRFARRLIKTTGARVTFATCLSVIHRSMIPNHNNVENLSFLTFSDGFDDGVISNTDDVQNRLVHFERNGDKALSDFIEANQNGDSPVSCLIYTILPNWVPKVARRFHLPSVHLWIQPAFAFDIYYNYSTGNNSVFEFPNLPSLEIRDLPSFLSPSNTNKAAQAVYQELMDFLKEESNPKILVNTFDSLEPEFLTAIPNIEMVAVGPLLPAEIFTGSESGKDLSRDHQSSSYTLWLDSKTESSVIYVSFGTMVELSKKQIEELARALIEGGRPFLWVITDKLNREAKIEGEEETEIEKIAGFRHELEEVGMIVSWCSQIEVLRHRAIGCFLTHCGWSSSLESLVLGVPVVAFPMWSDQPANAKLLEEIWKTGVRVRENSEGLVERGEIMRCLEAVMEAKSVELRENAEKWKRLATEAGREGGSSDKNVEAFVKSLF</sequence>
<feature type="chain" id="PRO_0000334598" description="UDP-glycosyltransferase 75B2">
    <location>
        <begin position="1"/>
        <end position="455"/>
    </location>
</feature>
<feature type="active site" description="Proton acceptor" evidence="1">
    <location>
        <position position="16"/>
    </location>
</feature>
<feature type="binding site" evidence="2">
    <location>
        <position position="16"/>
    </location>
    <ligand>
        <name>an anthocyanidin</name>
        <dbReference type="ChEBI" id="CHEBI:143576"/>
    </ligand>
</feature>
<feature type="binding site" evidence="1">
    <location>
        <position position="337"/>
    </location>
    <ligand>
        <name>UDP-alpha-D-glucose</name>
        <dbReference type="ChEBI" id="CHEBI:58885"/>
    </ligand>
</feature>
<feature type="binding site" evidence="1">
    <location>
        <position position="352"/>
    </location>
    <ligand>
        <name>UDP-alpha-D-glucose</name>
        <dbReference type="ChEBI" id="CHEBI:58885"/>
    </ligand>
</feature>
<feature type="binding site" evidence="1">
    <location>
        <position position="355"/>
    </location>
    <ligand>
        <name>UDP-alpha-D-glucose</name>
        <dbReference type="ChEBI" id="CHEBI:58885"/>
    </ligand>
</feature>
<feature type="binding site" evidence="1">
    <location>
        <position position="357"/>
    </location>
    <ligand>
        <name>UDP-alpha-D-glucose</name>
        <dbReference type="ChEBI" id="CHEBI:58885"/>
    </ligand>
</feature>
<feature type="binding site" evidence="1">
    <location>
        <position position="360"/>
    </location>
    <ligand>
        <name>UDP-alpha-D-glucose</name>
        <dbReference type="ChEBI" id="CHEBI:58885"/>
    </ligand>
</feature>
<feature type="binding site" evidence="1">
    <location>
        <position position="376"/>
    </location>
    <ligand>
        <name>UDP-alpha-D-glucose</name>
        <dbReference type="ChEBI" id="CHEBI:58885"/>
    </ligand>
</feature>
<feature type="binding site" evidence="1">
    <location>
        <position position="377"/>
    </location>
    <ligand>
        <name>UDP-alpha-D-glucose</name>
        <dbReference type="ChEBI" id="CHEBI:58885"/>
    </ligand>
</feature>
<evidence type="ECO:0000250" key="1">
    <source>
        <dbReference type="UniProtKB" id="A0A0A1HA03"/>
    </source>
</evidence>
<evidence type="ECO:0000250" key="2">
    <source>
        <dbReference type="UniProtKB" id="P51094"/>
    </source>
</evidence>
<evidence type="ECO:0000269" key="3">
    <source>
    </source>
</evidence>
<evidence type="ECO:0000269" key="4">
    <source>
    </source>
</evidence>
<evidence type="ECO:0000305" key="5"/>
<name>U75B2_ARATH</name>